<keyword id="KW-0007">Acetylation</keyword>
<keyword id="KW-0025">Alternative splicing</keyword>
<keyword id="KW-0131">Cell cycle</keyword>
<keyword id="KW-0132">Cell division</keyword>
<keyword id="KW-0175">Coiled coil</keyword>
<keyword id="KW-0963">Cytoplasm</keyword>
<keyword id="KW-0206">Cytoskeleton</keyword>
<keyword id="KW-0493">Microtubule</keyword>
<keyword id="KW-0498">Mitosis</keyword>
<keyword id="KW-0597">Phosphoprotein</keyword>
<keyword id="KW-1267">Proteomics identification</keyword>
<keyword id="KW-1185">Reference proteome</keyword>
<protein>
    <recommendedName>
        <fullName>Microtubule-associated protein 9</fullName>
    </recommendedName>
    <alternativeName>
        <fullName>Aster-associated protein</fullName>
    </alternativeName>
</protein>
<organism>
    <name type="scientific">Homo sapiens</name>
    <name type="common">Human</name>
    <dbReference type="NCBI Taxonomy" id="9606"/>
    <lineage>
        <taxon>Eukaryota</taxon>
        <taxon>Metazoa</taxon>
        <taxon>Chordata</taxon>
        <taxon>Craniata</taxon>
        <taxon>Vertebrata</taxon>
        <taxon>Euteleostomi</taxon>
        <taxon>Mammalia</taxon>
        <taxon>Eutheria</taxon>
        <taxon>Euarchontoglires</taxon>
        <taxon>Primates</taxon>
        <taxon>Haplorrhini</taxon>
        <taxon>Catarrhini</taxon>
        <taxon>Hominidae</taxon>
        <taxon>Homo</taxon>
    </lineage>
</organism>
<gene>
    <name type="primary">MAP9</name>
    <name type="synonym">ASAP</name>
</gene>
<evidence type="ECO:0000255" key="1"/>
<evidence type="ECO:0000256" key="2">
    <source>
        <dbReference type="SAM" id="MobiDB-lite"/>
    </source>
</evidence>
<evidence type="ECO:0000269" key="3">
    <source>
    </source>
</evidence>
<evidence type="ECO:0000269" key="4">
    <source>
    </source>
</evidence>
<evidence type="ECO:0000269" key="5">
    <source>
    </source>
</evidence>
<evidence type="ECO:0000303" key="6">
    <source>
    </source>
</evidence>
<evidence type="ECO:0000305" key="7"/>
<evidence type="ECO:0007744" key="8">
    <source>
    </source>
</evidence>
<evidence type="ECO:0007744" key="9">
    <source>
    </source>
</evidence>
<reference key="1">
    <citation type="journal article" date="2005" name="Proc. Natl. Acad. Sci. U.S.A.">
        <title>ASAP, a human microtubule-associated protein required for bipolar spindle assembly and cytokinesis.</title>
        <authorList>
            <person name="Saffin J.-M."/>
            <person name="Venoux M."/>
            <person name="Prigent C."/>
            <person name="Espeut J."/>
            <person name="Poulat F."/>
            <person name="Giorgi D."/>
            <person name="Abrieu A."/>
            <person name="Rouquier S."/>
        </authorList>
    </citation>
    <scope>NUCLEOTIDE SEQUENCE [MRNA]</scope>
    <scope>FUNCTION</scope>
    <scope>SUBCELLULAR LOCATION</scope>
    <scope>DEVELOPMENTAL STAGE</scope>
    <scope>VARIANT TRP-177</scope>
</reference>
<reference key="2">
    <citation type="journal article" date="2004" name="Nat. Genet.">
        <title>Complete sequencing and characterization of 21,243 full-length human cDNAs.</title>
        <authorList>
            <person name="Ota T."/>
            <person name="Suzuki Y."/>
            <person name="Nishikawa T."/>
            <person name="Otsuki T."/>
            <person name="Sugiyama T."/>
            <person name="Irie R."/>
            <person name="Wakamatsu A."/>
            <person name="Hayashi K."/>
            <person name="Sato H."/>
            <person name="Nagai K."/>
            <person name="Kimura K."/>
            <person name="Makita H."/>
            <person name="Sekine M."/>
            <person name="Obayashi M."/>
            <person name="Nishi T."/>
            <person name="Shibahara T."/>
            <person name="Tanaka T."/>
            <person name="Ishii S."/>
            <person name="Yamamoto J."/>
            <person name="Saito K."/>
            <person name="Kawai Y."/>
            <person name="Isono Y."/>
            <person name="Nakamura Y."/>
            <person name="Nagahari K."/>
            <person name="Murakami K."/>
            <person name="Yasuda T."/>
            <person name="Iwayanagi T."/>
            <person name="Wagatsuma M."/>
            <person name="Shiratori A."/>
            <person name="Sudo H."/>
            <person name="Hosoiri T."/>
            <person name="Kaku Y."/>
            <person name="Kodaira H."/>
            <person name="Kondo H."/>
            <person name="Sugawara M."/>
            <person name="Takahashi M."/>
            <person name="Kanda K."/>
            <person name="Yokoi T."/>
            <person name="Furuya T."/>
            <person name="Kikkawa E."/>
            <person name="Omura Y."/>
            <person name="Abe K."/>
            <person name="Kamihara K."/>
            <person name="Katsuta N."/>
            <person name="Sato K."/>
            <person name="Tanikawa M."/>
            <person name="Yamazaki M."/>
            <person name="Ninomiya K."/>
            <person name="Ishibashi T."/>
            <person name="Yamashita H."/>
            <person name="Murakawa K."/>
            <person name="Fujimori K."/>
            <person name="Tanai H."/>
            <person name="Kimata M."/>
            <person name="Watanabe M."/>
            <person name="Hiraoka S."/>
            <person name="Chiba Y."/>
            <person name="Ishida S."/>
            <person name="Ono Y."/>
            <person name="Takiguchi S."/>
            <person name="Watanabe S."/>
            <person name="Yosida M."/>
            <person name="Hotuta T."/>
            <person name="Kusano J."/>
            <person name="Kanehori K."/>
            <person name="Takahashi-Fujii A."/>
            <person name="Hara H."/>
            <person name="Tanase T.-O."/>
            <person name="Nomura Y."/>
            <person name="Togiya S."/>
            <person name="Komai F."/>
            <person name="Hara R."/>
            <person name="Takeuchi K."/>
            <person name="Arita M."/>
            <person name="Imose N."/>
            <person name="Musashino K."/>
            <person name="Yuuki H."/>
            <person name="Oshima A."/>
            <person name="Sasaki N."/>
            <person name="Aotsuka S."/>
            <person name="Yoshikawa Y."/>
            <person name="Matsunawa H."/>
            <person name="Ichihara T."/>
            <person name="Shiohata N."/>
            <person name="Sano S."/>
            <person name="Moriya S."/>
            <person name="Momiyama H."/>
            <person name="Satoh N."/>
            <person name="Takami S."/>
            <person name="Terashima Y."/>
            <person name="Suzuki O."/>
            <person name="Nakagawa S."/>
            <person name="Senoh A."/>
            <person name="Mizoguchi H."/>
            <person name="Goto Y."/>
            <person name="Shimizu F."/>
            <person name="Wakebe H."/>
            <person name="Hishigaki H."/>
            <person name="Watanabe T."/>
            <person name="Sugiyama A."/>
            <person name="Takemoto M."/>
            <person name="Kawakami B."/>
            <person name="Yamazaki M."/>
            <person name="Watanabe K."/>
            <person name="Kumagai A."/>
            <person name="Itakura S."/>
            <person name="Fukuzumi Y."/>
            <person name="Fujimori Y."/>
            <person name="Komiyama M."/>
            <person name="Tashiro H."/>
            <person name="Tanigami A."/>
            <person name="Fujiwara T."/>
            <person name="Ono T."/>
            <person name="Yamada K."/>
            <person name="Fujii Y."/>
            <person name="Ozaki K."/>
            <person name="Hirao M."/>
            <person name="Ohmori Y."/>
            <person name="Kawabata A."/>
            <person name="Hikiji T."/>
            <person name="Kobatake N."/>
            <person name="Inagaki H."/>
            <person name="Ikema Y."/>
            <person name="Okamoto S."/>
            <person name="Okitani R."/>
            <person name="Kawakami T."/>
            <person name="Noguchi S."/>
            <person name="Itoh T."/>
            <person name="Shigeta K."/>
            <person name="Senba T."/>
            <person name="Matsumura K."/>
            <person name="Nakajima Y."/>
            <person name="Mizuno T."/>
            <person name="Morinaga M."/>
            <person name="Sasaki M."/>
            <person name="Togashi T."/>
            <person name="Oyama M."/>
            <person name="Hata H."/>
            <person name="Watanabe M."/>
            <person name="Komatsu T."/>
            <person name="Mizushima-Sugano J."/>
            <person name="Satoh T."/>
            <person name="Shirai Y."/>
            <person name="Takahashi Y."/>
            <person name="Nakagawa K."/>
            <person name="Okumura K."/>
            <person name="Nagase T."/>
            <person name="Nomura N."/>
            <person name="Kikuchi H."/>
            <person name="Masuho Y."/>
            <person name="Yamashita R."/>
            <person name="Nakai K."/>
            <person name="Yada T."/>
            <person name="Nakamura Y."/>
            <person name="Ohara O."/>
            <person name="Isogai T."/>
            <person name="Sugano S."/>
        </authorList>
    </citation>
    <scope>NUCLEOTIDE SEQUENCE [LARGE SCALE MRNA] (ISOFORM 2)</scope>
    <scope>NUCLEOTIDE SEQUENCE [LARGE SCALE MRNA] OF 114-574 (ISOFORM 1)</scope>
    <scope>VARIANT TRP-177</scope>
</reference>
<reference key="3">
    <citation type="journal article" date="2005" name="Nature">
        <title>Generation and annotation of the DNA sequences of human chromosomes 2 and 4.</title>
        <authorList>
            <person name="Hillier L.W."/>
            <person name="Graves T.A."/>
            <person name="Fulton R.S."/>
            <person name="Fulton L.A."/>
            <person name="Pepin K.H."/>
            <person name="Minx P."/>
            <person name="Wagner-McPherson C."/>
            <person name="Layman D."/>
            <person name="Wylie K."/>
            <person name="Sekhon M."/>
            <person name="Becker M.C."/>
            <person name="Fewell G.A."/>
            <person name="Delehaunty K.D."/>
            <person name="Miner T.L."/>
            <person name="Nash W.E."/>
            <person name="Kremitzki C."/>
            <person name="Oddy L."/>
            <person name="Du H."/>
            <person name="Sun H."/>
            <person name="Bradshaw-Cordum H."/>
            <person name="Ali J."/>
            <person name="Carter J."/>
            <person name="Cordes M."/>
            <person name="Harris A."/>
            <person name="Isak A."/>
            <person name="van Brunt A."/>
            <person name="Nguyen C."/>
            <person name="Du F."/>
            <person name="Courtney L."/>
            <person name="Kalicki J."/>
            <person name="Ozersky P."/>
            <person name="Abbott S."/>
            <person name="Armstrong J."/>
            <person name="Belter E.A."/>
            <person name="Caruso L."/>
            <person name="Cedroni M."/>
            <person name="Cotton M."/>
            <person name="Davidson T."/>
            <person name="Desai A."/>
            <person name="Elliott G."/>
            <person name="Erb T."/>
            <person name="Fronick C."/>
            <person name="Gaige T."/>
            <person name="Haakenson W."/>
            <person name="Haglund K."/>
            <person name="Holmes A."/>
            <person name="Harkins R."/>
            <person name="Kim K."/>
            <person name="Kruchowski S.S."/>
            <person name="Strong C.M."/>
            <person name="Grewal N."/>
            <person name="Goyea E."/>
            <person name="Hou S."/>
            <person name="Levy A."/>
            <person name="Martinka S."/>
            <person name="Mead K."/>
            <person name="McLellan M.D."/>
            <person name="Meyer R."/>
            <person name="Randall-Maher J."/>
            <person name="Tomlinson C."/>
            <person name="Dauphin-Kohlberg S."/>
            <person name="Kozlowicz-Reilly A."/>
            <person name="Shah N."/>
            <person name="Swearengen-Shahid S."/>
            <person name="Snider J."/>
            <person name="Strong J.T."/>
            <person name="Thompson J."/>
            <person name="Yoakum M."/>
            <person name="Leonard S."/>
            <person name="Pearman C."/>
            <person name="Trani L."/>
            <person name="Radionenko M."/>
            <person name="Waligorski J.E."/>
            <person name="Wang C."/>
            <person name="Rock S.M."/>
            <person name="Tin-Wollam A.-M."/>
            <person name="Maupin R."/>
            <person name="Latreille P."/>
            <person name="Wendl M.C."/>
            <person name="Yang S.-P."/>
            <person name="Pohl C."/>
            <person name="Wallis J.W."/>
            <person name="Spieth J."/>
            <person name="Bieri T.A."/>
            <person name="Berkowicz N."/>
            <person name="Nelson J.O."/>
            <person name="Osborne J."/>
            <person name="Ding L."/>
            <person name="Meyer R."/>
            <person name="Sabo A."/>
            <person name="Shotland Y."/>
            <person name="Sinha P."/>
            <person name="Wohldmann P.E."/>
            <person name="Cook L.L."/>
            <person name="Hickenbotham M.T."/>
            <person name="Eldred J."/>
            <person name="Williams D."/>
            <person name="Jones T.A."/>
            <person name="She X."/>
            <person name="Ciccarelli F.D."/>
            <person name="Izaurralde E."/>
            <person name="Taylor J."/>
            <person name="Schmutz J."/>
            <person name="Myers R.M."/>
            <person name="Cox D.R."/>
            <person name="Huang X."/>
            <person name="McPherson J.D."/>
            <person name="Mardis E.R."/>
            <person name="Clifton S.W."/>
            <person name="Warren W.C."/>
            <person name="Chinwalla A.T."/>
            <person name="Eddy S.R."/>
            <person name="Marra M.A."/>
            <person name="Ovcharenko I."/>
            <person name="Furey T.S."/>
            <person name="Miller W."/>
            <person name="Eichler E.E."/>
            <person name="Bork P."/>
            <person name="Suyama M."/>
            <person name="Torrents D."/>
            <person name="Waterston R.H."/>
            <person name="Wilson R.K."/>
        </authorList>
    </citation>
    <scope>NUCLEOTIDE SEQUENCE [LARGE SCALE GENOMIC DNA]</scope>
</reference>
<reference key="4">
    <citation type="journal article" date="2007" name="BMC Genomics">
        <title>The full-ORF clone resource of the German cDNA consortium.</title>
        <authorList>
            <person name="Bechtel S."/>
            <person name="Rosenfelder H."/>
            <person name="Duda A."/>
            <person name="Schmidt C.P."/>
            <person name="Ernst U."/>
            <person name="Wellenreuther R."/>
            <person name="Mehrle A."/>
            <person name="Schuster C."/>
            <person name="Bahr A."/>
            <person name="Bloecker H."/>
            <person name="Heubner D."/>
            <person name="Hoerlein A."/>
            <person name="Michel G."/>
            <person name="Wedler H."/>
            <person name="Koehrer K."/>
            <person name="Ottenwaelder B."/>
            <person name="Poustka A."/>
            <person name="Wiemann S."/>
            <person name="Schupp I."/>
        </authorList>
    </citation>
    <scope>NUCLEOTIDE SEQUENCE [LARGE SCALE MRNA] OF 456-647</scope>
    <scope>VARIANT ASP-601</scope>
    <source>
        <tissue>Amygdala</tissue>
    </source>
</reference>
<reference key="5">
    <citation type="journal article" date="2009" name="Anal. Chem.">
        <title>Lys-N and trypsin cover complementary parts of the phosphoproteome in a refined SCX-based approach.</title>
        <authorList>
            <person name="Gauci S."/>
            <person name="Helbig A.O."/>
            <person name="Slijper M."/>
            <person name="Krijgsveld J."/>
            <person name="Heck A.J."/>
            <person name="Mohammed S."/>
        </authorList>
    </citation>
    <scope>ACETYLATION [LARGE SCALE ANALYSIS] AT SER-2</scope>
    <scope>CLEAVAGE OF INITIATOR METHIONINE [LARGE SCALE ANALYSIS]</scope>
    <scope>IDENTIFICATION BY MASS SPECTROMETRY [LARGE SCALE ANALYSIS]</scope>
</reference>
<reference key="6">
    <citation type="journal article" date="2009" name="Sci. Signal.">
        <title>Quantitative phosphoproteomic analysis of T cell receptor signaling reveals system-wide modulation of protein-protein interactions.</title>
        <authorList>
            <person name="Mayya V."/>
            <person name="Lundgren D.H."/>
            <person name="Hwang S.-I."/>
            <person name="Rezaul K."/>
            <person name="Wu L."/>
            <person name="Eng J.K."/>
            <person name="Rodionov V."/>
            <person name="Han D.K."/>
        </authorList>
    </citation>
    <scope>PHOSPHORYLATION [LARGE SCALE ANALYSIS] AT TYR-12</scope>
    <scope>IDENTIFICATION BY MASS SPECTROMETRY [LARGE SCALE ANALYSIS]</scope>
    <source>
        <tissue>Leukemic T-cell</tissue>
    </source>
</reference>
<name>MAP9_HUMAN</name>
<dbReference type="EMBL" id="AY690636">
    <property type="protein sequence ID" value="AAW02921.1"/>
    <property type="molecule type" value="mRNA"/>
</dbReference>
<dbReference type="EMBL" id="AK024730">
    <property type="protein sequence ID" value="BAB14978.1"/>
    <property type="status" value="ALT_SEQ"/>
    <property type="molecule type" value="mRNA"/>
</dbReference>
<dbReference type="EMBL" id="AK024812">
    <property type="protein sequence ID" value="BAB15017.1"/>
    <property type="molecule type" value="mRNA"/>
</dbReference>
<dbReference type="EMBL" id="AC097467">
    <property type="protein sequence ID" value="AAY40981.1"/>
    <property type="molecule type" value="Genomic_DNA"/>
</dbReference>
<dbReference type="EMBL" id="CR749274">
    <property type="protein sequence ID" value="CAH18129.1"/>
    <property type="molecule type" value="mRNA"/>
</dbReference>
<dbReference type="CCDS" id="CCDS35493.1">
    <molecule id="Q49MG5-1"/>
</dbReference>
<dbReference type="RefSeq" id="NP_001034669.1">
    <molecule id="Q49MG5-1"/>
    <property type="nucleotide sequence ID" value="NM_001039580.2"/>
</dbReference>
<dbReference type="RefSeq" id="XP_011530555.1">
    <molecule id="Q49MG5-1"/>
    <property type="nucleotide sequence ID" value="XM_011532253.2"/>
</dbReference>
<dbReference type="RefSeq" id="XP_011530556.1">
    <molecule id="Q49MG5-1"/>
    <property type="nucleotide sequence ID" value="XM_011532254.2"/>
</dbReference>
<dbReference type="RefSeq" id="XP_054206821.1">
    <molecule id="Q49MG5-1"/>
    <property type="nucleotide sequence ID" value="XM_054350846.1"/>
</dbReference>
<dbReference type="RefSeq" id="XP_054206822.1">
    <molecule id="Q49MG5-1"/>
    <property type="nucleotide sequence ID" value="XM_054350847.1"/>
</dbReference>
<dbReference type="SMR" id="Q49MG5"/>
<dbReference type="BioGRID" id="122969">
    <property type="interactions" value="51"/>
</dbReference>
<dbReference type="FunCoup" id="Q49MG5">
    <property type="interactions" value="454"/>
</dbReference>
<dbReference type="IntAct" id="Q49MG5">
    <property type="interactions" value="34"/>
</dbReference>
<dbReference type="STRING" id="9606.ENSP00000310593"/>
<dbReference type="iPTMnet" id="Q49MG5"/>
<dbReference type="PhosphoSitePlus" id="Q49MG5"/>
<dbReference type="BioMuta" id="MAP9"/>
<dbReference type="DMDM" id="116242626"/>
<dbReference type="jPOST" id="Q49MG5"/>
<dbReference type="MassIVE" id="Q49MG5"/>
<dbReference type="PaxDb" id="9606-ENSP00000310593"/>
<dbReference type="PeptideAtlas" id="Q49MG5"/>
<dbReference type="ProteomicsDB" id="62073">
    <molecule id="Q49MG5-1"/>
</dbReference>
<dbReference type="ProteomicsDB" id="62074">
    <molecule id="Q49MG5-2"/>
</dbReference>
<dbReference type="Pumba" id="Q49MG5"/>
<dbReference type="Antibodypedia" id="48220">
    <property type="antibodies" value="88 antibodies from 21 providers"/>
</dbReference>
<dbReference type="DNASU" id="79884"/>
<dbReference type="Ensembl" id="ENST00000311277.9">
    <molecule id="Q49MG5-1"/>
    <property type="protein sequence ID" value="ENSP00000310593.4"/>
    <property type="gene ID" value="ENSG00000164114.19"/>
</dbReference>
<dbReference type="Ensembl" id="ENST00000650955.1">
    <molecule id="Q49MG5-1"/>
    <property type="protein sequence ID" value="ENSP00000498412.1"/>
    <property type="gene ID" value="ENSG00000164114.19"/>
</dbReference>
<dbReference type="GeneID" id="79884"/>
<dbReference type="KEGG" id="hsa:79884"/>
<dbReference type="MANE-Select" id="ENST00000311277.9">
    <property type="protein sequence ID" value="ENSP00000310593.4"/>
    <property type="RefSeq nucleotide sequence ID" value="NM_001039580.2"/>
    <property type="RefSeq protein sequence ID" value="NP_001034669.1"/>
</dbReference>
<dbReference type="UCSC" id="uc003ios.4">
    <molecule id="Q49MG5-1"/>
    <property type="organism name" value="human"/>
</dbReference>
<dbReference type="AGR" id="HGNC:26118"/>
<dbReference type="CTD" id="79884"/>
<dbReference type="DisGeNET" id="79884"/>
<dbReference type="GeneCards" id="MAP9"/>
<dbReference type="HGNC" id="HGNC:26118">
    <property type="gene designation" value="MAP9"/>
</dbReference>
<dbReference type="HPA" id="ENSG00000164114">
    <property type="expression patterns" value="Tissue enhanced (parathyroid)"/>
</dbReference>
<dbReference type="MIM" id="610070">
    <property type="type" value="gene"/>
</dbReference>
<dbReference type="neXtProt" id="NX_Q49MG5"/>
<dbReference type="OpenTargets" id="ENSG00000164114"/>
<dbReference type="PharmGKB" id="PA145148442"/>
<dbReference type="VEuPathDB" id="HostDB:ENSG00000164114"/>
<dbReference type="eggNOG" id="ENOG502R2PC">
    <property type="taxonomic scope" value="Eukaryota"/>
</dbReference>
<dbReference type="GeneTree" id="ENSGT00730000111184"/>
<dbReference type="InParanoid" id="Q49MG5"/>
<dbReference type="OMA" id="YENWLVR"/>
<dbReference type="OrthoDB" id="8956542at2759"/>
<dbReference type="PAN-GO" id="Q49MG5">
    <property type="GO annotations" value="4 GO annotations based on evolutionary models"/>
</dbReference>
<dbReference type="PhylomeDB" id="Q49MG5"/>
<dbReference type="TreeFam" id="TF328794"/>
<dbReference type="PathwayCommons" id="Q49MG5"/>
<dbReference type="SignaLink" id="Q49MG5"/>
<dbReference type="SIGNOR" id="Q49MG5"/>
<dbReference type="BioGRID-ORCS" id="79884">
    <property type="hits" value="5 hits in 1150 CRISPR screens"/>
</dbReference>
<dbReference type="CD-CODE" id="8C2F96ED">
    <property type="entry name" value="Centrosome"/>
</dbReference>
<dbReference type="ChiTaRS" id="MAP9">
    <property type="organism name" value="human"/>
</dbReference>
<dbReference type="GenomeRNAi" id="79884"/>
<dbReference type="Pharos" id="Q49MG5">
    <property type="development level" value="Tbio"/>
</dbReference>
<dbReference type="PRO" id="PR:Q49MG5"/>
<dbReference type="Proteomes" id="UP000005640">
    <property type="component" value="Chromosome 4"/>
</dbReference>
<dbReference type="RNAct" id="Q49MG5">
    <property type="molecule type" value="protein"/>
</dbReference>
<dbReference type="Bgee" id="ENSG00000164114">
    <property type="expression patterns" value="Expressed in lateral nuclear group of thalamus and 192 other cell types or tissues"/>
</dbReference>
<dbReference type="ExpressionAtlas" id="Q49MG5">
    <property type="expression patterns" value="baseline and differential"/>
</dbReference>
<dbReference type="GO" id="GO:0000235">
    <property type="term" value="C:astral microtubule"/>
    <property type="evidence" value="ECO:0000314"/>
    <property type="project" value="UniProtKB"/>
</dbReference>
<dbReference type="GO" id="GO:0030424">
    <property type="term" value="C:axon"/>
    <property type="evidence" value="ECO:0000250"/>
    <property type="project" value="ARUK-UCL"/>
</dbReference>
<dbReference type="GO" id="GO:0005737">
    <property type="term" value="C:cytoplasm"/>
    <property type="evidence" value="ECO:0000314"/>
    <property type="project" value="UniProtKB"/>
</dbReference>
<dbReference type="GO" id="GO:0072686">
    <property type="term" value="C:mitotic spindle"/>
    <property type="evidence" value="ECO:0000314"/>
    <property type="project" value="UniProtKB"/>
</dbReference>
<dbReference type="GO" id="GO:1990023">
    <property type="term" value="C:mitotic spindle midzone"/>
    <property type="evidence" value="ECO:0007669"/>
    <property type="project" value="Ensembl"/>
</dbReference>
<dbReference type="GO" id="GO:0051233">
    <property type="term" value="C:spindle midzone"/>
    <property type="evidence" value="ECO:0000314"/>
    <property type="project" value="UniProtKB"/>
</dbReference>
<dbReference type="GO" id="GO:0008017">
    <property type="term" value="F:microtubule binding"/>
    <property type="evidence" value="ECO:0000315"/>
    <property type="project" value="UniProtKB"/>
</dbReference>
<dbReference type="GO" id="GO:0000281">
    <property type="term" value="P:mitotic cytokinesis"/>
    <property type="evidence" value="ECO:0007669"/>
    <property type="project" value="InterPro"/>
</dbReference>
<dbReference type="GO" id="GO:0090307">
    <property type="term" value="P:mitotic spindle assembly"/>
    <property type="evidence" value="ECO:0000314"/>
    <property type="project" value="UniProtKB"/>
</dbReference>
<dbReference type="GO" id="GO:0046602">
    <property type="term" value="P:regulation of mitotic centrosome separation"/>
    <property type="evidence" value="ECO:0000315"/>
    <property type="project" value="UniProtKB"/>
</dbReference>
<dbReference type="GO" id="GO:1902412">
    <property type="term" value="P:regulation of mitotic cytokinesis"/>
    <property type="evidence" value="ECO:0000315"/>
    <property type="project" value="UniProtKB"/>
</dbReference>
<dbReference type="GO" id="GO:0060236">
    <property type="term" value="P:regulation of mitotic spindle organization"/>
    <property type="evidence" value="ECO:0000315"/>
    <property type="project" value="UniProtKB"/>
</dbReference>
<dbReference type="InterPro" id="IPR026106">
    <property type="entry name" value="MAP9"/>
</dbReference>
<dbReference type="PANTHER" id="PTHR14739">
    <property type="entry name" value="MICROTUBULE-ASSOCIATED PROTEIN 9"/>
    <property type="match status" value="1"/>
</dbReference>
<dbReference type="PANTHER" id="PTHR14739:SF9">
    <property type="entry name" value="MICROTUBULE-ASSOCIATED PROTEIN 9"/>
    <property type="match status" value="1"/>
</dbReference>
<accession>Q49MG5</accession>
<accession>Q4W5I7</accession>
<accession>Q68DU1</accession>
<accession>Q9H781</accession>
<accession>Q9H7B6</accession>
<proteinExistence type="evidence at protein level"/>
<sequence length="647" mass="74234">MSDEVFSTTLAYTKSPKVTKRTTFQDELIRAITARSARQRSSEYSDDFDSDEIVSLGDFSDTSADENSVNKKMNDFHISDDEEKNPSKLLFLKTNKSNGNITKDEPVCAIKNEEEMAPDGCEDIVVKSFSESQNKDEEFEKDKIKMKPKPRILSIKSTSSAENNSLDTDDHFKPSPRPRSMLKKKSHMEEKDGLEDKETALSEELELHSAPSSLPTPNGIQLEAEKKAFSENLDPEDSCLTSLASSSLKQILGDSFSPGSEGNASGKDPNEEITENHNSLKSDENKENSFSADHVTTAVEKSKESQVTADDLEEEKAKAELIMDDDRTVDPLLSKSQSILISTSATASSKKTIEDRNIKNKKSTNNRASSASARLMTSEFLKKSSSKRRTPSTTTSSHYLGTLKVLDQKPSQKQSIEPDRADNIRAAVYQEWLEKKNVYLHEMHRIKRIESENLRIQNEQKKAAKREEALASFEAWKAMKEKEAKKIAAKKRLEEKNKKKTEEENAARKGEALQAFEKWKEKKMEYLKEKNRKEREYERAKKQKEEETVAEKKKDNLTAVEKWNEKKEAFFKQKEKEKINEKRKEELKRAEKKDKDKQAINEYEKWLENKEKQERIERKQKKRHSFLESEALPPWSPPSRTVFAKVF</sequence>
<feature type="initiator methionine" description="Removed" evidence="8">
    <location>
        <position position="1"/>
    </location>
</feature>
<feature type="chain" id="PRO_0000247753" description="Microtubule-associated protein 9">
    <location>
        <begin position="2"/>
        <end position="647"/>
    </location>
</feature>
<feature type="region of interest" description="Disordered" evidence="2">
    <location>
        <begin position="127"/>
        <end position="323"/>
    </location>
</feature>
<feature type="region of interest" description="Disordered" evidence="2">
    <location>
        <begin position="344"/>
        <end position="421"/>
    </location>
</feature>
<feature type="region of interest" description="Disordered" evidence="2">
    <location>
        <begin position="491"/>
        <end position="514"/>
    </location>
</feature>
<feature type="region of interest" description="Disordered" evidence="2">
    <location>
        <begin position="530"/>
        <end position="553"/>
    </location>
</feature>
<feature type="region of interest" description="Disordered" evidence="2">
    <location>
        <begin position="580"/>
        <end position="600"/>
    </location>
</feature>
<feature type="region of interest" description="Disordered" evidence="2">
    <location>
        <begin position="613"/>
        <end position="647"/>
    </location>
</feature>
<feature type="coiled-coil region" evidence="1">
    <location>
        <begin position="184"/>
        <end position="210"/>
    </location>
</feature>
<feature type="coiled-coil region" evidence="1">
    <location>
        <begin position="298"/>
        <end position="328"/>
    </location>
</feature>
<feature type="coiled-coil region" evidence="1">
    <location>
        <begin position="443"/>
        <end position="628"/>
    </location>
</feature>
<feature type="compositionally biased region" description="Basic and acidic residues" evidence="2">
    <location>
        <begin position="133"/>
        <end position="145"/>
    </location>
</feature>
<feature type="compositionally biased region" description="Polar residues" evidence="2">
    <location>
        <begin position="155"/>
        <end position="166"/>
    </location>
</feature>
<feature type="compositionally biased region" description="Basic residues" evidence="2">
    <location>
        <begin position="174"/>
        <end position="186"/>
    </location>
</feature>
<feature type="compositionally biased region" description="Basic and acidic residues" evidence="2">
    <location>
        <begin position="187"/>
        <end position="200"/>
    </location>
</feature>
<feature type="compositionally biased region" description="Polar residues" evidence="2">
    <location>
        <begin position="210"/>
        <end position="219"/>
    </location>
</feature>
<feature type="compositionally biased region" description="Polar residues" evidence="2">
    <location>
        <begin position="239"/>
        <end position="249"/>
    </location>
</feature>
<feature type="compositionally biased region" description="Basic and acidic residues" evidence="2">
    <location>
        <begin position="268"/>
        <end position="287"/>
    </location>
</feature>
<feature type="compositionally biased region" description="Low complexity" evidence="2">
    <location>
        <begin position="365"/>
        <end position="374"/>
    </location>
</feature>
<feature type="modified residue" description="N-acetylserine" evidence="8">
    <location>
        <position position="2"/>
    </location>
</feature>
<feature type="modified residue" description="Phosphotyrosine" evidence="9">
    <location>
        <position position="12"/>
    </location>
</feature>
<feature type="splice variant" id="VSP_020037" description="In isoform 2." evidence="6">
    <original>RLMT</original>
    <variation>ARSG</variation>
    <location>
        <begin position="374"/>
        <end position="377"/>
    </location>
</feature>
<feature type="splice variant" id="VSP_020038" description="In isoform 2." evidence="6">
    <location>
        <begin position="378"/>
        <end position="647"/>
    </location>
</feature>
<feature type="sequence variant" id="VAR_051152" description="In dbSNP:rs34082815.">
    <original>M</original>
    <variation>V</variation>
    <location>
        <position position="146"/>
    </location>
</feature>
<feature type="sequence variant" id="VAR_027151" description="In dbSNP:rs3733391." evidence="3 4">
    <original>R</original>
    <variation>W</variation>
    <location>
        <position position="177"/>
    </location>
</feature>
<feature type="sequence variant" id="VAR_051153" description="In dbSNP:rs1058992.">
    <original>K</original>
    <variation>R</variation>
    <location>
        <position position="499"/>
    </location>
</feature>
<feature type="sequence variant" id="VAR_051154" description="In dbSNP:rs2305050." evidence="5">
    <original>N</original>
    <variation>D</variation>
    <location>
        <position position="601"/>
    </location>
</feature>
<feature type="sequence conflict" description="In Ref. 2; BAB14978." evidence="7" ref="2">
    <original>M</original>
    <variation>L</variation>
    <location>
        <position position="116"/>
    </location>
</feature>
<feature type="sequence conflict" description="In Ref. 2; BAB14978." evidence="7" ref="2">
    <original>E</original>
    <variation>G</variation>
    <location>
        <position position="450"/>
    </location>
</feature>
<feature type="sequence conflict" description="In Ref. 1; AAW02921." evidence="7" ref="1">
    <original>E</original>
    <variation>K</variation>
    <location>
        <position position="575"/>
    </location>
</feature>
<feature type="sequence conflict" description="In Ref. 4; CAH18129." evidence="7" ref="4">
    <original>A</original>
    <variation>T</variation>
    <location>
        <position position="631"/>
    </location>
</feature>
<comment type="function">
    <text evidence="4">Involved in organization of the bipolar mitotic spindle. Required for bipolar spindle assembly, mitosis progression and cytokinesis. May act by stabilizing interphase microtubules.</text>
</comment>
<comment type="subunit">
    <text>Binds to purified microtubules via its C-terminus.</text>
</comment>
<comment type="subcellular location">
    <subcellularLocation>
        <location evidence="4">Cytoplasm</location>
    </subcellularLocation>
    <subcellularLocation>
        <location evidence="4">Cytoplasm</location>
        <location evidence="4">Cytoskeleton</location>
    </subcellularLocation>
    <subcellularLocation>
        <location evidence="4">Cytoplasm</location>
        <location evidence="4">Cytoskeleton</location>
        <location evidence="4">Spindle</location>
    </subcellularLocation>
    <text>Localizes to microtubules in interphase, associates with the mitotic spindle during mitosis, localizes to the central body during cytokinesis.</text>
</comment>
<comment type="alternative products">
    <event type="alternative splicing"/>
    <isoform>
        <id>Q49MG5-1</id>
        <name>1</name>
        <sequence type="displayed"/>
    </isoform>
    <isoform>
        <id>Q49MG5-2</id>
        <name>2</name>
        <sequence type="described" ref="VSP_020037 VSP_020038"/>
    </isoform>
</comment>
<comment type="developmental stage">
    <text evidence="4">Constitutively expressed during the cell cycle.</text>
</comment>